<feature type="chain" id="PRO_1000213504" description="tRNA pseudouridine synthase B">
    <location>
        <begin position="1"/>
        <end position="313"/>
    </location>
</feature>
<feature type="active site" description="Nucleophile" evidence="1">
    <location>
        <position position="49"/>
    </location>
</feature>
<feature type="binding site" evidence="1">
    <location>
        <position position="44"/>
    </location>
    <ligand>
        <name>substrate</name>
    </ligand>
</feature>
<feature type="binding site" evidence="1">
    <location>
        <position position="77"/>
    </location>
    <ligand>
        <name>substrate</name>
    </ligand>
</feature>
<feature type="binding site" evidence="1">
    <location>
        <position position="180"/>
    </location>
    <ligand>
        <name>substrate</name>
    </ligand>
</feature>
<feature type="binding site" evidence="1">
    <location>
        <position position="201"/>
    </location>
    <ligand>
        <name>substrate</name>
    </ligand>
</feature>
<protein>
    <recommendedName>
        <fullName evidence="1">tRNA pseudouridine synthase B</fullName>
        <ecNumber evidence="1">5.4.99.25</ecNumber>
    </recommendedName>
    <alternativeName>
        <fullName evidence="1">tRNA pseudouridine(55) synthase</fullName>
        <shortName evidence="1">Psi55 synthase</shortName>
    </alternativeName>
    <alternativeName>
        <fullName evidence="1">tRNA pseudouridylate synthase</fullName>
    </alternativeName>
    <alternativeName>
        <fullName evidence="1">tRNA-uridine isomerase</fullName>
    </alternativeName>
</protein>
<keyword id="KW-0413">Isomerase</keyword>
<keyword id="KW-0819">tRNA processing</keyword>
<reference key="1">
    <citation type="journal article" date="2009" name="Proc. Natl. Acad. Sci. U.S.A.">
        <title>Hamiltonella defensa, genome evolution of protective bacterial endosymbiont from pathogenic ancestors.</title>
        <authorList>
            <person name="Degnan P.H."/>
            <person name="Yu Y."/>
            <person name="Sisneros N."/>
            <person name="Wing R.A."/>
            <person name="Moran N.A."/>
        </authorList>
    </citation>
    <scope>NUCLEOTIDE SEQUENCE [LARGE SCALE GENOMIC DNA]</scope>
    <source>
        <strain>5AT</strain>
    </source>
</reference>
<name>TRUB_HAMD5</name>
<dbReference type="EC" id="5.4.99.25" evidence="1"/>
<dbReference type="EMBL" id="CP001277">
    <property type="protein sequence ID" value="ACQ67091.1"/>
    <property type="molecule type" value="Genomic_DNA"/>
</dbReference>
<dbReference type="RefSeq" id="WP_012738052.1">
    <property type="nucleotide sequence ID" value="NC_012751.1"/>
</dbReference>
<dbReference type="SMR" id="C4K3E8"/>
<dbReference type="STRING" id="572265.HDEF_0329"/>
<dbReference type="GeneID" id="66260244"/>
<dbReference type="KEGG" id="hde:HDEF_0329"/>
<dbReference type="eggNOG" id="COG0130">
    <property type="taxonomic scope" value="Bacteria"/>
</dbReference>
<dbReference type="HOGENOM" id="CLU_032087_0_3_6"/>
<dbReference type="Proteomes" id="UP000002334">
    <property type="component" value="Chromosome"/>
</dbReference>
<dbReference type="GO" id="GO:0003723">
    <property type="term" value="F:RNA binding"/>
    <property type="evidence" value="ECO:0007669"/>
    <property type="project" value="InterPro"/>
</dbReference>
<dbReference type="GO" id="GO:0160148">
    <property type="term" value="F:tRNA pseudouridine(55) synthase activity"/>
    <property type="evidence" value="ECO:0007669"/>
    <property type="project" value="UniProtKB-EC"/>
</dbReference>
<dbReference type="GO" id="GO:1990481">
    <property type="term" value="P:mRNA pseudouridine synthesis"/>
    <property type="evidence" value="ECO:0007669"/>
    <property type="project" value="TreeGrafter"/>
</dbReference>
<dbReference type="GO" id="GO:0031119">
    <property type="term" value="P:tRNA pseudouridine synthesis"/>
    <property type="evidence" value="ECO:0007669"/>
    <property type="project" value="UniProtKB-UniRule"/>
</dbReference>
<dbReference type="CDD" id="cd02573">
    <property type="entry name" value="PseudoU_synth_EcTruB"/>
    <property type="match status" value="1"/>
</dbReference>
<dbReference type="CDD" id="cd21152">
    <property type="entry name" value="PUA_TruB_bacterial"/>
    <property type="match status" value="1"/>
</dbReference>
<dbReference type="FunFam" id="3.30.2350.10:FF:000003">
    <property type="entry name" value="tRNA pseudouridine synthase B"/>
    <property type="match status" value="1"/>
</dbReference>
<dbReference type="Gene3D" id="3.30.2350.10">
    <property type="entry name" value="Pseudouridine synthase"/>
    <property type="match status" value="1"/>
</dbReference>
<dbReference type="Gene3D" id="2.30.130.10">
    <property type="entry name" value="PUA domain"/>
    <property type="match status" value="1"/>
</dbReference>
<dbReference type="HAMAP" id="MF_01080">
    <property type="entry name" value="TruB_bact"/>
    <property type="match status" value="1"/>
</dbReference>
<dbReference type="InterPro" id="IPR020103">
    <property type="entry name" value="PsdUridine_synth_cat_dom_sf"/>
</dbReference>
<dbReference type="InterPro" id="IPR002501">
    <property type="entry name" value="PsdUridine_synth_N"/>
</dbReference>
<dbReference type="InterPro" id="IPR015947">
    <property type="entry name" value="PUA-like_sf"/>
</dbReference>
<dbReference type="InterPro" id="IPR036974">
    <property type="entry name" value="PUA_sf"/>
</dbReference>
<dbReference type="InterPro" id="IPR014780">
    <property type="entry name" value="tRNA_psdUridine_synth_TruB"/>
</dbReference>
<dbReference type="InterPro" id="IPR015240">
    <property type="entry name" value="tRNA_sdUridine_synth_fam1_C"/>
</dbReference>
<dbReference type="InterPro" id="IPR032819">
    <property type="entry name" value="TruB_C"/>
</dbReference>
<dbReference type="NCBIfam" id="TIGR00431">
    <property type="entry name" value="TruB"/>
    <property type="match status" value="1"/>
</dbReference>
<dbReference type="PANTHER" id="PTHR13767:SF2">
    <property type="entry name" value="PSEUDOURIDYLATE SYNTHASE TRUB1"/>
    <property type="match status" value="1"/>
</dbReference>
<dbReference type="PANTHER" id="PTHR13767">
    <property type="entry name" value="TRNA-PSEUDOURIDINE SYNTHASE"/>
    <property type="match status" value="1"/>
</dbReference>
<dbReference type="Pfam" id="PF09157">
    <property type="entry name" value="TruB-C_2"/>
    <property type="match status" value="1"/>
</dbReference>
<dbReference type="Pfam" id="PF16198">
    <property type="entry name" value="TruB_C_2"/>
    <property type="match status" value="1"/>
</dbReference>
<dbReference type="Pfam" id="PF01509">
    <property type="entry name" value="TruB_N"/>
    <property type="match status" value="1"/>
</dbReference>
<dbReference type="SUPFAM" id="SSF55120">
    <property type="entry name" value="Pseudouridine synthase"/>
    <property type="match status" value="1"/>
</dbReference>
<dbReference type="SUPFAM" id="SSF88697">
    <property type="entry name" value="PUA domain-like"/>
    <property type="match status" value="1"/>
</dbReference>
<accession>C4K3E8</accession>
<sequence length="313" mass="34875">MKSKRRHSGRDVNGILLLDKPKNFSSNQVLQKVKSLFAARRAGHTGALDPLATGMLPICLGEATKFSPFLLNADKRYRVTAYLGHKTETSDAEGSVINKREITFTQPQLEEALEKFRGPILQIPSMYSALKHQGRPLYEYARQGVTLDREARRITVFDLQCLRWEGHELELEIHCSKGTYIRTIVDDLGEVLGCGAYVSDLRRLQVADYTHDSMVTLEKLEELTLKNNTLGSAIDLLLLPIESTALHLPEVNLESGAAACIKQGQPVSFFDNPTDTMVRLTEGGERHFIGIGIIDAHGRIAPKRLLRNVSDAL</sequence>
<organism>
    <name type="scientific">Hamiltonella defensa subsp. Acyrthosiphon pisum (strain 5AT)</name>
    <dbReference type="NCBI Taxonomy" id="572265"/>
    <lineage>
        <taxon>Bacteria</taxon>
        <taxon>Pseudomonadati</taxon>
        <taxon>Pseudomonadota</taxon>
        <taxon>Gammaproteobacteria</taxon>
        <taxon>Enterobacterales</taxon>
        <taxon>Enterobacteriaceae</taxon>
        <taxon>aphid secondary symbionts</taxon>
        <taxon>Candidatus Hamiltonella</taxon>
    </lineage>
</organism>
<gene>
    <name evidence="1" type="primary">truB</name>
    <name type="ordered locus">HDEF_0329</name>
</gene>
<proteinExistence type="inferred from homology"/>
<evidence type="ECO:0000255" key="1">
    <source>
        <dbReference type="HAMAP-Rule" id="MF_01080"/>
    </source>
</evidence>
<comment type="function">
    <text evidence="1">Responsible for synthesis of pseudouridine from uracil-55 in the psi GC loop of transfer RNAs.</text>
</comment>
<comment type="catalytic activity">
    <reaction evidence="1">
        <text>uridine(55) in tRNA = pseudouridine(55) in tRNA</text>
        <dbReference type="Rhea" id="RHEA:42532"/>
        <dbReference type="Rhea" id="RHEA-COMP:10101"/>
        <dbReference type="Rhea" id="RHEA-COMP:10102"/>
        <dbReference type="ChEBI" id="CHEBI:65314"/>
        <dbReference type="ChEBI" id="CHEBI:65315"/>
        <dbReference type="EC" id="5.4.99.25"/>
    </reaction>
</comment>
<comment type="similarity">
    <text evidence="1">Belongs to the pseudouridine synthase TruB family. Type 1 subfamily.</text>
</comment>